<accession>P33539</accession>
<keyword id="KW-0240">DNA-directed RNA polymerase</keyword>
<keyword id="KW-0496">Mitochondrion</keyword>
<keyword id="KW-0548">Nucleotidyltransferase</keyword>
<keyword id="KW-0614">Plasmid</keyword>
<keyword id="KW-0804">Transcription</keyword>
<keyword id="KW-0808">Transferase</keyword>
<name>RPOP_AGABT</name>
<dbReference type="EC" id="2.7.7.6"/>
<dbReference type="EMBL" id="X63075">
    <property type="protein sequence ID" value="CAA44799.1"/>
    <property type="molecule type" value="Genomic_DNA"/>
</dbReference>
<dbReference type="PIR" id="S28104">
    <property type="entry name" value="S28104"/>
</dbReference>
<dbReference type="SMR" id="P33539"/>
<dbReference type="GO" id="GO:0034245">
    <property type="term" value="C:mitochondrial DNA-directed RNA polymerase complex"/>
    <property type="evidence" value="ECO:0007669"/>
    <property type="project" value="TreeGrafter"/>
</dbReference>
<dbReference type="GO" id="GO:0003677">
    <property type="term" value="F:DNA binding"/>
    <property type="evidence" value="ECO:0007669"/>
    <property type="project" value="InterPro"/>
</dbReference>
<dbReference type="GO" id="GO:0003899">
    <property type="term" value="F:DNA-directed RNA polymerase activity"/>
    <property type="evidence" value="ECO:0007669"/>
    <property type="project" value="UniProtKB-EC"/>
</dbReference>
<dbReference type="GO" id="GO:0006390">
    <property type="term" value="P:mitochondrial transcription"/>
    <property type="evidence" value="ECO:0007669"/>
    <property type="project" value="TreeGrafter"/>
</dbReference>
<dbReference type="Gene3D" id="3.30.70.370">
    <property type="match status" value="1"/>
</dbReference>
<dbReference type="Gene3D" id="1.10.150.20">
    <property type="entry name" value="5' to 3' exonuclease, C-terminal subdomain"/>
    <property type="match status" value="1"/>
</dbReference>
<dbReference type="InterPro" id="IPR046950">
    <property type="entry name" value="DNA-dir_Rpol_C_phage-type"/>
</dbReference>
<dbReference type="InterPro" id="IPR002092">
    <property type="entry name" value="DNA-dir_Rpol_phage-type"/>
</dbReference>
<dbReference type="InterPro" id="IPR043502">
    <property type="entry name" value="DNA/RNA_pol_sf"/>
</dbReference>
<dbReference type="PANTHER" id="PTHR10102">
    <property type="entry name" value="DNA-DIRECTED RNA POLYMERASE, MITOCHONDRIAL"/>
    <property type="match status" value="1"/>
</dbReference>
<dbReference type="PANTHER" id="PTHR10102:SF0">
    <property type="entry name" value="DNA-DIRECTED RNA POLYMERASE, MITOCHONDRIAL"/>
    <property type="match status" value="1"/>
</dbReference>
<dbReference type="Pfam" id="PF00940">
    <property type="entry name" value="RNA_pol"/>
    <property type="match status" value="1"/>
</dbReference>
<dbReference type="SUPFAM" id="SSF56672">
    <property type="entry name" value="DNA/RNA polymerases"/>
    <property type="match status" value="1"/>
</dbReference>
<dbReference type="PROSITE" id="PS00900">
    <property type="entry name" value="RNA_POL_PHAGE_1"/>
    <property type="match status" value="1"/>
</dbReference>
<dbReference type="PROSITE" id="PS00489">
    <property type="entry name" value="RNA_POL_PHAGE_2"/>
    <property type="match status" value="1"/>
</dbReference>
<protein>
    <recommendedName>
        <fullName>Probable DNA-directed RNA polymerase</fullName>
        <ecNumber>2.7.7.6</ecNumber>
    </recommendedName>
</protein>
<reference key="1">
    <citation type="journal article" date="1991" name="Curr. Genet.">
        <title>Homology between mitochondrial DNA of Agaricus bisporus and an internal portion of a linear mitochondrial plasmid of Agaricus bitorquis.</title>
        <authorList>
            <person name="Robison M.M."/>
            <person name="Royer J.C."/>
            <person name="Horgen P.A."/>
        </authorList>
    </citation>
    <scope>NUCLEOTIDE SEQUENCE [GENOMIC DNA]</scope>
    <source>
        <strain>ATCC 24666 / Ag4 / CBS 507.73</strain>
    </source>
</reference>
<sequence length="1102" mass="126665">NSIVRKRIEISTNENRGQLVVSSDKYSLVDNLFYNLHDYASQSKHNIIIDDGKVEKLLNLICNVLDRNVNELNDSVFLIIKDIEKECKYYVSNVLYRSVGSRKNRGREVEWSSYKYNKEFNKVLDKGIISINNEVLKFISKEREGYIERVESIAVTVKNKILELNNNIAEVLLSIKNKVIVLNKESVVAKVEEINYEVHNKFIKGNGNTNFSNRNLTEIKSILKELNKMEILDNRINKLSTKESDLLKVIKEILDSNLIIEDKQLAIEKTVVEYELTFFRHNMDTHETRNKIIHNIYPKLNKAYTELLANYKLNRYSKIKKSIHLISNKSEGTKSKEMIKLIVVLVILYIGIDKCISYSFYQIINLLTNARDGTSRTNIAINLGFRIIKVLKYIKLDENPSLNALYPINKLKDEISKLDNEGIYWIGDTLLGLITANCDIVVEELKWNSGKDSQLEVRINDKFISNLTVSGINIVQLPMLTEPRKISSDGLYFPYINSDTTNLHLFEGELIKGKYNLRDHTEASEMLYSSINYLNSIKFKINKAMLNFILAEWDNKDSKLFKGYNMLKPILETDSKEIKEEKVSSNSKYTLYSNIISLASLYKDNEFYLPVYVDFRGRVYPLSNYISYQGGDLARSLILFADTKCVLNNSGKECLNVYLANLAGYDKLPWSERLTKVDGIIKEYLESNEISNTKYIEDNIDKISEPFQFISIMYAKLLSISNPKANISNPILFDASCSGIQHIAALTLEKELASNVNLYTDSSNPKEDYPQDFYTYALEKIRDKLINSDITELRDIKLNRKIIKRSVMTIPYNISMAGIGEHLMEHFTVKTVLKYRYVVIPGSATISSKDVYLDYSKYGQLCKIIYFVLTKELPSLRLLSNYFESMIDIFVKLNIPITWVTPSGLKIKYTNIKFKPQKVKTSVLNTSKITTIKLPTDSLDVLSTKRSFMPNFIHSLDASNVHLLLNSVSYKNLPVYTVHDCFASTANNMFKLEKLVKNAFINIYFNDEGYLLKLHKHFVDTIISATDPYLSNGNIENENDIKGLTTERLEYKPLLSSNYVADRISTKADIIKIPDLPAGYKNKNKNINEFVKGILNSKYFIG</sequence>
<feature type="chain" id="PRO_0000087753" description="Probable DNA-directed RNA polymerase">
    <location>
        <begin position="1"/>
        <end position="1102"/>
    </location>
</feature>
<feature type="active site" evidence="1">
    <location>
        <position position="734"/>
    </location>
</feature>
<feature type="active site" evidence="1">
    <location>
        <position position="804"/>
    </location>
</feature>
<feature type="active site" evidence="1">
    <location>
        <position position="980"/>
    </location>
</feature>
<geneLocation type="mitochondrion"/>
<geneLocation type="plasmid">
    <name>pEM</name>
</geneLocation>
<proteinExistence type="inferred from homology"/>
<comment type="function">
    <text>DNA-dependent RNA polymerase catalyzes the transcription of DNA into RNA using the four ribonucleoside triphosphates as substrates.</text>
</comment>
<comment type="catalytic activity">
    <reaction evidence="2 3">
        <text>RNA(n) + a ribonucleoside 5'-triphosphate = RNA(n+1) + diphosphate</text>
        <dbReference type="Rhea" id="RHEA:21248"/>
        <dbReference type="Rhea" id="RHEA-COMP:14527"/>
        <dbReference type="Rhea" id="RHEA-COMP:17342"/>
        <dbReference type="ChEBI" id="CHEBI:33019"/>
        <dbReference type="ChEBI" id="CHEBI:61557"/>
        <dbReference type="ChEBI" id="CHEBI:140395"/>
        <dbReference type="EC" id="2.7.7.6"/>
    </reaction>
</comment>
<comment type="subcellular location">
    <subcellularLocation>
        <location evidence="4">Mitochondrion</location>
    </subcellularLocation>
</comment>
<comment type="similarity">
    <text evidence="4">Belongs to the phage and mitochondrial RNA polymerase family.</text>
</comment>
<evidence type="ECO:0000250" key="1"/>
<evidence type="ECO:0000255" key="2">
    <source>
        <dbReference type="PROSITE-ProRule" id="PRU10031"/>
    </source>
</evidence>
<evidence type="ECO:0000255" key="3">
    <source>
        <dbReference type="PROSITE-ProRule" id="PRU10032"/>
    </source>
</evidence>
<evidence type="ECO:0000305" key="4"/>
<organism>
    <name type="scientific">Agaricus bitorquis</name>
    <name type="common">Pavement mushroom</name>
    <name type="synonym">Psalliota bitorquis</name>
    <dbReference type="NCBI Taxonomy" id="5343"/>
    <lineage>
        <taxon>Eukaryota</taxon>
        <taxon>Fungi</taxon>
        <taxon>Dikarya</taxon>
        <taxon>Basidiomycota</taxon>
        <taxon>Agaricomycotina</taxon>
        <taxon>Agaricomycetes</taxon>
        <taxon>Agaricomycetidae</taxon>
        <taxon>Agaricales</taxon>
        <taxon>Agaricineae</taxon>
        <taxon>Agaricaceae</taxon>
        <taxon>Agaricus</taxon>
    </lineage>
</organism>